<gene>
    <name evidence="1" type="primary">atat1</name>
    <name type="synonym">mec17</name>
    <name type="ORF">si:ch211-152p11.5</name>
    <name type="ORF">zgc:65893</name>
</gene>
<evidence type="ECO:0000255" key="1">
    <source>
        <dbReference type="HAMAP-Rule" id="MF_03130"/>
    </source>
</evidence>
<evidence type="ECO:0000256" key="2">
    <source>
        <dbReference type="SAM" id="MobiDB-lite"/>
    </source>
</evidence>
<evidence type="ECO:0000269" key="3">
    <source>
    </source>
</evidence>
<evidence type="ECO:0000269" key="4">
    <source>
    </source>
</evidence>
<evidence type="ECO:0000269" key="5">
    <source>
    </source>
</evidence>
<evidence type="ECO:0000303" key="6">
    <source ref="2"/>
</evidence>
<evidence type="ECO:0007829" key="7">
    <source>
        <dbReference type="PDB" id="4H6U"/>
    </source>
</evidence>
<evidence type="ECO:0007829" key="8">
    <source>
        <dbReference type="PDB" id="4HKF"/>
    </source>
</evidence>
<feature type="chain" id="PRO_0000402067" description="Alpha-tubulin N-acetyltransferase 1">
    <location>
        <begin position="1"/>
        <end position="297"/>
    </location>
</feature>
<feature type="domain" description="N-acetyltransferase" evidence="1">
    <location>
        <begin position="1"/>
        <end position="184"/>
    </location>
</feature>
<feature type="region of interest" description="Disordered" evidence="2">
    <location>
        <begin position="226"/>
        <end position="297"/>
    </location>
</feature>
<feature type="compositionally biased region" description="Pro residues" evidence="2">
    <location>
        <begin position="230"/>
        <end position="240"/>
    </location>
</feature>
<feature type="compositionally biased region" description="Low complexity" evidence="2">
    <location>
        <begin position="241"/>
        <end position="264"/>
    </location>
</feature>
<feature type="compositionally biased region" description="Polar residues" evidence="2">
    <location>
        <begin position="266"/>
        <end position="278"/>
    </location>
</feature>
<feature type="compositionally biased region" description="Polar residues" evidence="2">
    <location>
        <begin position="286"/>
        <end position="297"/>
    </location>
</feature>
<feature type="binding site" evidence="1 4 5">
    <location>
        <begin position="118"/>
        <end position="131"/>
    </location>
    <ligand>
        <name>acetyl-CoA</name>
        <dbReference type="ChEBI" id="CHEBI:57288"/>
    </ligand>
</feature>
<feature type="binding site" evidence="1 4 5">
    <location>
        <begin position="154"/>
        <end position="163"/>
    </location>
    <ligand>
        <name>acetyl-CoA</name>
        <dbReference type="ChEBI" id="CHEBI:57288"/>
    </ligand>
</feature>
<feature type="site" description="Crucial for catalytic activity" evidence="1 5">
    <location>
        <position position="53"/>
    </location>
</feature>
<feature type="splice variant" id="VSP_040229" description="In isoform 2." evidence="6">
    <original>AVQLRKVPPRKPEGEIKPYSLMEREVVREEQRVLPWPFVRPGGPPHSPPLLPSSPQSRSLSVGSSPSRAPLRPAAATVLQQGQTPSSPLNDSCRAKRTSSLNRSRLSFH</original>
    <variation>GTPPSPLTDQGMYGFFGPTEKSSPKKARGRDQTLFANGKRSGSGGAEGSPLAICSPRGSPPLSPSTSVISSIPFSQCGILPQPGPASPRRGHGPPAGSDPLIPAQRQLQGKTHQFSK</variation>
    <location>
        <begin position="189"/>
        <end position="297"/>
    </location>
</feature>
<feature type="mutagenesis site" description="Reduces activity to 30%." evidence="4">
    <original>L</original>
    <variation>A</variation>
    <location>
        <position position="45"/>
    </location>
</feature>
<feature type="mutagenesis site" description="Reduces activity to 1.5%." evidence="5">
    <original>Q</original>
    <variation>A</variation>
    <location>
        <position position="53"/>
    </location>
</feature>
<feature type="mutagenesis site" description="Reduces activity to 3%. Causes the formation of a constitutive dimer in solution." evidence="4">
    <original>D</original>
    <variation>A</variation>
    <location>
        <position position="117"/>
    </location>
</feature>
<feature type="mutagenesis site" description="Reduces activity to 19%." evidence="4">
    <original>R</original>
    <variation>E</variation>
    <location>
        <position position="126"/>
    </location>
</feature>
<feature type="mutagenesis site" description="No effect." evidence="4">
    <original>S</original>
    <variation>L</variation>
    <location>
        <position position="131"/>
    </location>
</feature>
<feature type="mutagenesis site" description="Reduces activity to 1%." evidence="4">
    <original>D</original>
    <variation>A</variation>
    <location>
        <position position="151"/>
    </location>
</feature>
<feature type="mutagenesis site" description="Reduces activity to 8%." evidence="4">
    <original>S</original>
    <variation>A</variation>
    <location>
        <position position="154"/>
    </location>
</feature>
<feature type="strand" evidence="7">
    <location>
        <begin position="1"/>
        <end position="4"/>
    </location>
</feature>
<feature type="helix" evidence="8">
    <location>
        <begin position="7"/>
        <end position="10"/>
    </location>
</feature>
<feature type="strand" evidence="8">
    <location>
        <begin position="13"/>
        <end position="20"/>
    </location>
</feature>
<feature type="helix" evidence="7">
    <location>
        <begin position="21"/>
        <end position="28"/>
    </location>
</feature>
<feature type="helix" evidence="8">
    <location>
        <begin position="35"/>
        <end position="52"/>
    </location>
</feature>
<feature type="helix" evidence="8">
    <location>
        <begin position="62"/>
        <end position="67"/>
    </location>
</feature>
<feature type="strand" evidence="8">
    <location>
        <begin position="71"/>
        <end position="77"/>
    </location>
</feature>
<feature type="helix" evidence="8">
    <location>
        <begin position="80"/>
        <end position="83"/>
    </location>
</feature>
<feature type="strand" evidence="8">
    <location>
        <begin position="86"/>
        <end position="95"/>
    </location>
</feature>
<feature type="strand" evidence="8">
    <location>
        <begin position="98"/>
        <end position="101"/>
    </location>
</feature>
<feature type="strand" evidence="8">
    <location>
        <begin position="107"/>
        <end position="110"/>
    </location>
</feature>
<feature type="strand" evidence="8">
    <location>
        <begin position="113"/>
        <end position="120"/>
    </location>
</feature>
<feature type="helix" evidence="8">
    <location>
        <begin position="122"/>
        <end position="124"/>
    </location>
</feature>
<feature type="helix" evidence="8">
    <location>
        <begin position="129"/>
        <end position="141"/>
    </location>
</feature>
<feature type="helix" evidence="8">
    <location>
        <begin position="145"/>
        <end position="147"/>
    </location>
</feature>
<feature type="strand" evidence="8">
    <location>
        <begin position="148"/>
        <end position="152"/>
    </location>
</feature>
<feature type="helix" evidence="8">
    <location>
        <begin position="155"/>
        <end position="165"/>
    </location>
</feature>
<feature type="strand" evidence="8">
    <location>
        <begin position="174"/>
        <end position="179"/>
    </location>
</feature>
<feature type="helix" evidence="8">
    <location>
        <begin position="181"/>
        <end position="183"/>
    </location>
</feature>
<sequence>MDFPYDLNALFPERISVLDSNLSAGRKAHGRPDPLPQVTTVIDELGKASSKAQQLPAPITSAAKLQANRHHLYLLKDGEQNGGRGVIVGFLKVGYKKLFLLDQRGAHLETEPLCVLDFYVTETLQRHGYGSELFDFMLKHKQVEPAQMAYDRPSPKFLSFLEKRYDLRNSVPQVNNFVVFAGFFQSRSAVQLRKVPPRKPEGEIKPYSLMEREVVREEQRVLPWPFVRPGGPPHSPPLLPSSPQSRSLSVGSSPSRAPLRPAAATVLQQGQTPSSPLNDSCRAKRTSSLNRSRLSFH</sequence>
<dbReference type="EC" id="2.3.1.108" evidence="1"/>
<dbReference type="EMBL" id="BX511233">
    <property type="protein sequence ID" value="CAM56330.1"/>
    <property type="molecule type" value="Genomic_DNA"/>
</dbReference>
<dbReference type="EMBL" id="BC056749">
    <property type="protein sequence ID" value="AAH56749.1"/>
    <property type="molecule type" value="mRNA"/>
</dbReference>
<dbReference type="EMBL" id="BC065981">
    <property type="protein sequence ID" value="AAH65981.1"/>
    <property type="molecule type" value="mRNA"/>
</dbReference>
<dbReference type="RefSeq" id="NP_001315192.1">
    <molecule id="Q6PH17-1"/>
    <property type="nucleotide sequence ID" value="NM_001328263.1"/>
</dbReference>
<dbReference type="RefSeq" id="NP_001315193.1">
    <property type="nucleotide sequence ID" value="NM_001328264.1"/>
</dbReference>
<dbReference type="RefSeq" id="NP_998423.1">
    <molecule id="Q6PH17-2"/>
    <property type="nucleotide sequence ID" value="NM_213258.2"/>
</dbReference>
<dbReference type="PDB" id="4H6U">
    <property type="method" value="X-ray"/>
    <property type="resolution" value="2.45 A"/>
    <property type="chains" value="A/B=1-188"/>
</dbReference>
<dbReference type="PDB" id="4H6Z">
    <property type="method" value="X-ray"/>
    <property type="resolution" value="2.70 A"/>
    <property type="chains" value="A/B=1-186"/>
</dbReference>
<dbReference type="PDB" id="4HKF">
    <property type="method" value="X-ray"/>
    <property type="resolution" value="1.70 A"/>
    <property type="chains" value="A=1-188"/>
</dbReference>
<dbReference type="PDB" id="4YRH">
    <property type="method" value="X-ray"/>
    <property type="resolution" value="2.86 A"/>
    <property type="chains" value="A/B=2-185"/>
</dbReference>
<dbReference type="PDBsum" id="4H6U"/>
<dbReference type="PDBsum" id="4H6Z"/>
<dbReference type="PDBsum" id="4HKF"/>
<dbReference type="PDBsum" id="4YRH"/>
<dbReference type="SMR" id="Q6PH17"/>
<dbReference type="FunCoup" id="Q6PH17">
    <property type="interactions" value="397"/>
</dbReference>
<dbReference type="STRING" id="7955.ENSDARP00000049367"/>
<dbReference type="PaxDb" id="7955-ENSDARP00000049367"/>
<dbReference type="DNASU" id="406389"/>
<dbReference type="Ensembl" id="ENSDART00000103922">
    <molecule id="Q6PH17-1"/>
    <property type="protein sequence ID" value="ENSDARP00000094698"/>
    <property type="gene ID" value="ENSDARG00000004472"/>
</dbReference>
<dbReference type="GeneID" id="406389"/>
<dbReference type="KEGG" id="dre:406389"/>
<dbReference type="AGR" id="ZFIN:ZDB-GENE-040426-2120"/>
<dbReference type="CTD" id="79969"/>
<dbReference type="ZFIN" id="ZDB-GENE-040426-2120">
    <property type="gene designation" value="atat1"/>
</dbReference>
<dbReference type="eggNOG" id="KOG4601">
    <property type="taxonomic scope" value="Eukaryota"/>
</dbReference>
<dbReference type="HOGENOM" id="CLU_949825_0_0_1"/>
<dbReference type="InParanoid" id="Q6PH17"/>
<dbReference type="OrthoDB" id="447510at2759"/>
<dbReference type="PhylomeDB" id="Q6PH17"/>
<dbReference type="TreeFam" id="TF315643"/>
<dbReference type="EvolutionaryTrace" id="Q6PH17"/>
<dbReference type="PRO" id="PR:Q6PH17"/>
<dbReference type="Proteomes" id="UP000000437">
    <property type="component" value="Chromosome 19"/>
</dbReference>
<dbReference type="Bgee" id="ENSDARG00000004472">
    <property type="expression patterns" value="Expressed in head and 17 other cell types or tissues"/>
</dbReference>
<dbReference type="ExpressionAtlas" id="Q6PH17">
    <property type="expression patterns" value="baseline"/>
</dbReference>
<dbReference type="GO" id="GO:0030424">
    <property type="term" value="C:axon"/>
    <property type="evidence" value="ECO:0007669"/>
    <property type="project" value="UniProtKB-SubCell"/>
</dbReference>
<dbReference type="GO" id="GO:0005905">
    <property type="term" value="C:clathrin-coated pit"/>
    <property type="evidence" value="ECO:0007669"/>
    <property type="project" value="UniProtKB-SubCell"/>
</dbReference>
<dbReference type="GO" id="GO:0005737">
    <property type="term" value="C:cytoplasm"/>
    <property type="evidence" value="ECO:0007669"/>
    <property type="project" value="UniProtKB-SubCell"/>
</dbReference>
<dbReference type="GO" id="GO:0005925">
    <property type="term" value="C:focal adhesion"/>
    <property type="evidence" value="ECO:0007669"/>
    <property type="project" value="UniProtKB-SubCell"/>
</dbReference>
<dbReference type="GO" id="GO:0005874">
    <property type="term" value="C:microtubule"/>
    <property type="evidence" value="ECO:0007669"/>
    <property type="project" value="InterPro"/>
</dbReference>
<dbReference type="GO" id="GO:0005819">
    <property type="term" value="C:spindle"/>
    <property type="evidence" value="ECO:0007669"/>
    <property type="project" value="UniProtKB-SubCell"/>
</dbReference>
<dbReference type="GO" id="GO:0004468">
    <property type="term" value="F:L-lysine N-acetyltransferase activity, acting on acetyl phosphate as donor"/>
    <property type="evidence" value="ECO:0000250"/>
    <property type="project" value="UniProtKB"/>
</dbReference>
<dbReference type="GO" id="GO:0019799">
    <property type="term" value="F:tubulin N-acetyltransferase activity"/>
    <property type="evidence" value="ECO:0000315"/>
    <property type="project" value="UniProtKB"/>
</dbReference>
<dbReference type="GO" id="GO:0071929">
    <property type="term" value="P:alpha-tubulin acetylation"/>
    <property type="evidence" value="ECO:0000250"/>
    <property type="project" value="UniProtKB"/>
</dbReference>
<dbReference type="GO" id="GO:0000226">
    <property type="term" value="P:microtubule cytoskeleton organization"/>
    <property type="evidence" value="ECO:0000318"/>
    <property type="project" value="GO_Central"/>
</dbReference>
<dbReference type="GO" id="GO:0048666">
    <property type="term" value="P:neuron development"/>
    <property type="evidence" value="ECO:0007669"/>
    <property type="project" value="UniProtKB-UniRule"/>
</dbReference>
<dbReference type="GO" id="GO:0070507">
    <property type="term" value="P:regulation of microtubule cytoskeleton organization"/>
    <property type="evidence" value="ECO:0007669"/>
    <property type="project" value="UniProtKB-UniRule"/>
</dbReference>
<dbReference type="FunFam" id="3.40.630.30:FF:000020">
    <property type="entry name" value="Alpha-tubulin N-acetyltransferase 1"/>
    <property type="match status" value="1"/>
</dbReference>
<dbReference type="Gene3D" id="3.40.630.30">
    <property type="match status" value="1"/>
</dbReference>
<dbReference type="Gene3D" id="6.20.370.120">
    <property type="match status" value="1"/>
</dbReference>
<dbReference type="HAMAP" id="MF_03130">
    <property type="entry name" value="mec17"/>
    <property type="match status" value="1"/>
</dbReference>
<dbReference type="InterPro" id="IPR016181">
    <property type="entry name" value="Acyl_CoA_acyltransferase"/>
</dbReference>
<dbReference type="InterPro" id="IPR038746">
    <property type="entry name" value="Atat"/>
</dbReference>
<dbReference type="InterPro" id="IPR007965">
    <property type="entry name" value="GNAT_ATAT"/>
</dbReference>
<dbReference type="PANTHER" id="PTHR12327">
    <property type="entry name" value="ALPHA-TUBULIN N-ACETYLTRANSFERASE 1"/>
    <property type="match status" value="1"/>
</dbReference>
<dbReference type="PANTHER" id="PTHR12327:SF0">
    <property type="entry name" value="ALPHA-TUBULIN N-ACETYLTRANSFERASE 1"/>
    <property type="match status" value="1"/>
</dbReference>
<dbReference type="Pfam" id="PF05301">
    <property type="entry name" value="Acetyltransf_16"/>
    <property type="match status" value="1"/>
</dbReference>
<dbReference type="SUPFAM" id="SSF55729">
    <property type="entry name" value="Acyl-CoA N-acyltransferases (Nat)"/>
    <property type="match status" value="1"/>
</dbReference>
<dbReference type="PROSITE" id="PS51730">
    <property type="entry name" value="GNAT_ATAT"/>
    <property type="match status" value="1"/>
</dbReference>
<name>ATAT_DANRE</name>
<accession>Q6PH17</accession>
<accession>Q6NZT0</accession>
<comment type="function">
    <text evidence="1 3">Specifically acetylates 'Lys-40' in alpha-tubulin on the lumenal side of microtubules. Promotes microtubule destabilization and accelerates microtubule dynamics; this activity may be independent of acetylation activity. Acetylates alpha-tubulin with a slow enzymatic rate, due to a catalytic site that is not optimized for acetyl transfer. Enters the microtubule through each end and diffuses quickly throughout the lumen of microtubules. Acetylates only long/old microtubules because of its slow acetylation rate since it does not have time to act on dynamically unstable microtubules before the enzyme is released. May be involved in neuron development. Acetylates alpha-tubulin in neurons, but not in cilia.</text>
</comment>
<comment type="catalytic activity">
    <reaction evidence="1">
        <text>L-lysyl-[alpha-tubulin] + acetyl-CoA = N(6)-acetyl-L-lysyl-[alpha-tubulin] + CoA + H(+)</text>
        <dbReference type="Rhea" id="RHEA:15277"/>
        <dbReference type="Rhea" id="RHEA-COMP:11278"/>
        <dbReference type="Rhea" id="RHEA-COMP:11279"/>
        <dbReference type="ChEBI" id="CHEBI:15378"/>
        <dbReference type="ChEBI" id="CHEBI:29969"/>
        <dbReference type="ChEBI" id="CHEBI:57287"/>
        <dbReference type="ChEBI" id="CHEBI:57288"/>
        <dbReference type="ChEBI" id="CHEBI:61930"/>
        <dbReference type="EC" id="2.3.1.108"/>
    </reaction>
</comment>
<comment type="subunit">
    <text evidence="4 5">Monomer.</text>
</comment>
<comment type="subcellular location">
    <subcellularLocation>
        <location evidence="1">Cytoplasm</location>
    </subcellularLocation>
    <subcellularLocation>
        <location evidence="1">Membrane</location>
        <location evidence="1">Clathrin-coated pit</location>
    </subcellularLocation>
    <subcellularLocation>
        <location evidence="1">Cell junction</location>
        <location evidence="1">Focal adhesion</location>
    </subcellularLocation>
    <subcellularLocation>
        <location evidence="1">Cell projection</location>
        <location evidence="1">Axon</location>
    </subcellularLocation>
    <subcellularLocation>
        <location evidence="1">Cytoplasm</location>
        <location evidence="1">Cytoskeleton</location>
    </subcellularLocation>
    <subcellularLocation>
        <location evidence="1">Cytoplasm</location>
        <location evidence="1">Cytoskeleton</location>
        <location evidence="1">Spindle</location>
    </subcellularLocation>
</comment>
<comment type="alternative products">
    <event type="alternative splicing"/>
    <isoform>
        <id>Q6PH17-1</id>
        <name>1</name>
        <sequence type="displayed"/>
    </isoform>
    <isoform>
        <id>Q6PH17-2</id>
        <name>2</name>
        <sequence type="described" ref="VSP_040229"/>
    </isoform>
</comment>
<comment type="disruption phenotype">
    <text evidence="3">Morpholino knockdown of the protein causes developmental defects at 48 hours post-fertilization (hpf), including cilia curved body shape, short body axis, hydrocephalus, small head and small eyes. Morphants often do not respond, or have slow startle response, when probed with a needle, consistent with neuromuscular defects.</text>
</comment>
<comment type="similarity">
    <text evidence="1">Belongs to the acetyltransferase ATAT1 family.</text>
</comment>
<protein>
    <recommendedName>
        <fullName evidence="1">Alpha-tubulin N-acetyltransferase 1</fullName>
        <shortName evidence="1">Alpha-TAT</shortName>
        <shortName evidence="1">Alpha-TAT1</shortName>
        <shortName evidence="1">TAT</shortName>
        <ecNumber evidence="1">2.3.1.108</ecNumber>
    </recommendedName>
    <alternativeName>
        <fullName evidence="1">Acetyltransferase mec-17 homolog</fullName>
    </alternativeName>
</protein>
<keyword id="KW-0002">3D-structure</keyword>
<keyword id="KW-0012">Acyltransferase</keyword>
<keyword id="KW-0025">Alternative splicing</keyword>
<keyword id="KW-0965">Cell junction</keyword>
<keyword id="KW-0966">Cell projection</keyword>
<keyword id="KW-0168">Coated pit</keyword>
<keyword id="KW-0963">Cytoplasm</keyword>
<keyword id="KW-0206">Cytoskeleton</keyword>
<keyword id="KW-0472">Membrane</keyword>
<keyword id="KW-1185">Reference proteome</keyword>
<keyword id="KW-0808">Transferase</keyword>
<proteinExistence type="evidence at protein level"/>
<reference key="1">
    <citation type="journal article" date="2013" name="Nature">
        <title>The zebrafish reference genome sequence and its relationship to the human genome.</title>
        <authorList>
            <person name="Howe K."/>
            <person name="Clark M.D."/>
            <person name="Torroja C.F."/>
            <person name="Torrance J."/>
            <person name="Berthelot C."/>
            <person name="Muffato M."/>
            <person name="Collins J.E."/>
            <person name="Humphray S."/>
            <person name="McLaren K."/>
            <person name="Matthews L."/>
            <person name="McLaren S."/>
            <person name="Sealy I."/>
            <person name="Caccamo M."/>
            <person name="Churcher C."/>
            <person name="Scott C."/>
            <person name="Barrett J.C."/>
            <person name="Koch R."/>
            <person name="Rauch G.J."/>
            <person name="White S."/>
            <person name="Chow W."/>
            <person name="Kilian B."/>
            <person name="Quintais L.T."/>
            <person name="Guerra-Assuncao J.A."/>
            <person name="Zhou Y."/>
            <person name="Gu Y."/>
            <person name="Yen J."/>
            <person name="Vogel J.H."/>
            <person name="Eyre T."/>
            <person name="Redmond S."/>
            <person name="Banerjee R."/>
            <person name="Chi J."/>
            <person name="Fu B."/>
            <person name="Langley E."/>
            <person name="Maguire S.F."/>
            <person name="Laird G.K."/>
            <person name="Lloyd D."/>
            <person name="Kenyon E."/>
            <person name="Donaldson S."/>
            <person name="Sehra H."/>
            <person name="Almeida-King J."/>
            <person name="Loveland J."/>
            <person name="Trevanion S."/>
            <person name="Jones M."/>
            <person name="Quail M."/>
            <person name="Willey D."/>
            <person name="Hunt A."/>
            <person name="Burton J."/>
            <person name="Sims S."/>
            <person name="McLay K."/>
            <person name="Plumb B."/>
            <person name="Davis J."/>
            <person name="Clee C."/>
            <person name="Oliver K."/>
            <person name="Clark R."/>
            <person name="Riddle C."/>
            <person name="Elliot D."/>
            <person name="Threadgold G."/>
            <person name="Harden G."/>
            <person name="Ware D."/>
            <person name="Begum S."/>
            <person name="Mortimore B."/>
            <person name="Kerry G."/>
            <person name="Heath P."/>
            <person name="Phillimore B."/>
            <person name="Tracey A."/>
            <person name="Corby N."/>
            <person name="Dunn M."/>
            <person name="Johnson C."/>
            <person name="Wood J."/>
            <person name="Clark S."/>
            <person name="Pelan S."/>
            <person name="Griffiths G."/>
            <person name="Smith M."/>
            <person name="Glithero R."/>
            <person name="Howden P."/>
            <person name="Barker N."/>
            <person name="Lloyd C."/>
            <person name="Stevens C."/>
            <person name="Harley J."/>
            <person name="Holt K."/>
            <person name="Panagiotidis G."/>
            <person name="Lovell J."/>
            <person name="Beasley H."/>
            <person name="Henderson C."/>
            <person name="Gordon D."/>
            <person name="Auger K."/>
            <person name="Wright D."/>
            <person name="Collins J."/>
            <person name="Raisen C."/>
            <person name="Dyer L."/>
            <person name="Leung K."/>
            <person name="Robertson L."/>
            <person name="Ambridge K."/>
            <person name="Leongamornlert D."/>
            <person name="McGuire S."/>
            <person name="Gilderthorp R."/>
            <person name="Griffiths C."/>
            <person name="Manthravadi D."/>
            <person name="Nichol S."/>
            <person name="Barker G."/>
            <person name="Whitehead S."/>
            <person name="Kay M."/>
            <person name="Brown J."/>
            <person name="Murnane C."/>
            <person name="Gray E."/>
            <person name="Humphries M."/>
            <person name="Sycamore N."/>
            <person name="Barker D."/>
            <person name="Saunders D."/>
            <person name="Wallis J."/>
            <person name="Babbage A."/>
            <person name="Hammond S."/>
            <person name="Mashreghi-Mohammadi M."/>
            <person name="Barr L."/>
            <person name="Martin S."/>
            <person name="Wray P."/>
            <person name="Ellington A."/>
            <person name="Matthews N."/>
            <person name="Ellwood M."/>
            <person name="Woodmansey R."/>
            <person name="Clark G."/>
            <person name="Cooper J."/>
            <person name="Tromans A."/>
            <person name="Grafham D."/>
            <person name="Skuce C."/>
            <person name="Pandian R."/>
            <person name="Andrews R."/>
            <person name="Harrison E."/>
            <person name="Kimberley A."/>
            <person name="Garnett J."/>
            <person name="Fosker N."/>
            <person name="Hall R."/>
            <person name="Garner P."/>
            <person name="Kelly D."/>
            <person name="Bird C."/>
            <person name="Palmer S."/>
            <person name="Gehring I."/>
            <person name="Berger A."/>
            <person name="Dooley C.M."/>
            <person name="Ersan-Urun Z."/>
            <person name="Eser C."/>
            <person name="Geiger H."/>
            <person name="Geisler M."/>
            <person name="Karotki L."/>
            <person name="Kirn A."/>
            <person name="Konantz J."/>
            <person name="Konantz M."/>
            <person name="Oberlander M."/>
            <person name="Rudolph-Geiger S."/>
            <person name="Teucke M."/>
            <person name="Lanz C."/>
            <person name="Raddatz G."/>
            <person name="Osoegawa K."/>
            <person name="Zhu B."/>
            <person name="Rapp A."/>
            <person name="Widaa S."/>
            <person name="Langford C."/>
            <person name="Yang F."/>
            <person name="Schuster S.C."/>
            <person name="Carter N.P."/>
            <person name="Harrow J."/>
            <person name="Ning Z."/>
            <person name="Herrero J."/>
            <person name="Searle S.M."/>
            <person name="Enright A."/>
            <person name="Geisler R."/>
            <person name="Plasterk R.H."/>
            <person name="Lee C."/>
            <person name="Westerfield M."/>
            <person name="de Jong P.J."/>
            <person name="Zon L.I."/>
            <person name="Postlethwait J.H."/>
            <person name="Nusslein-Volhard C."/>
            <person name="Hubbard T.J."/>
            <person name="Roest Crollius H."/>
            <person name="Rogers J."/>
            <person name="Stemple D.L."/>
        </authorList>
    </citation>
    <scope>NUCLEOTIDE SEQUENCE [LARGE SCALE GENOMIC DNA]</scope>
    <source>
        <strain>Tuebingen</strain>
    </source>
</reference>
<reference key="2">
    <citation type="submission" date="2003-08" db="EMBL/GenBank/DDBJ databases">
        <authorList>
            <consortium name="NIH - Zebrafish Gene Collection (ZGC) project"/>
        </authorList>
    </citation>
    <scope>NUCLEOTIDE SEQUENCE [LARGE SCALE MRNA] (ISOFORMS 1 AND 2)</scope>
    <source>
        <tissue>Embryo</tissue>
    </source>
</reference>
<reference key="3">
    <citation type="journal article" date="2010" name="Nature">
        <title>MEC-17 is an alpha-tubulin acetyltransferase.</title>
        <authorList>
            <person name="Akella J.S."/>
            <person name="Wloga D."/>
            <person name="Kim J."/>
            <person name="Starostina N.G."/>
            <person name="Lyons-Abbott S."/>
            <person name="Morrissette N.S."/>
            <person name="Dougan S.T."/>
            <person name="Kipreos E.T."/>
            <person name="Gaertig J."/>
        </authorList>
    </citation>
    <scope>FUNCTION</scope>
    <scope>DISRUPTION PHENOTYPE</scope>
</reference>
<reference key="4">
    <citation type="journal article" date="2012" name="Cell Res.">
        <title>Molecular basis of the acetyltransferase activity of MEC-17 towards alpha-tubulin.</title>
        <authorList>
            <person name="Li W."/>
            <person name="Zhong C."/>
            <person name="Li L."/>
            <person name="Sun B."/>
            <person name="Wang W."/>
            <person name="Xu S."/>
            <person name="Zhang T."/>
            <person name="Wang C."/>
            <person name="Bao L."/>
            <person name="Ding J."/>
        </authorList>
    </citation>
    <scope>X-RAY CRYSTALLOGRAPHY (1.70 ANGSTROMS) OF 1-188 IN COMPLEX WITH ACETYL-COA</scope>
    <scope>MUTAGENESIS OF GLN-53</scope>
</reference>
<reference key="5">
    <citation type="journal article" date="2012" name="J. Biol. Chem.">
        <title>Crystal structures of tubulin acetyltransferase reveal a conserved catalytic core and the plasticity of the essential N terminus.</title>
        <authorList>
            <person name="Kormendi V."/>
            <person name="Szyk A."/>
            <person name="Piszczek G."/>
            <person name="Roll-Mecak A."/>
        </authorList>
    </citation>
    <scope>X-RAY CRYSTALLOGRAPHY (2.45 ANGSTROMS) OF 1-188 OF WILD-TYPE AND OF MUTANT ALA-117 IN COMPLEX WITH ACETYL-COA</scope>
    <scope>SUBUNIT</scope>
    <scope>MUTAGENESIS OF LEU-45; ASP-117; ARG-126; SER-131; ASP-151 AND SER-154</scope>
</reference>
<organism>
    <name type="scientific">Danio rerio</name>
    <name type="common">Zebrafish</name>
    <name type="synonym">Brachydanio rerio</name>
    <dbReference type="NCBI Taxonomy" id="7955"/>
    <lineage>
        <taxon>Eukaryota</taxon>
        <taxon>Metazoa</taxon>
        <taxon>Chordata</taxon>
        <taxon>Craniata</taxon>
        <taxon>Vertebrata</taxon>
        <taxon>Euteleostomi</taxon>
        <taxon>Actinopterygii</taxon>
        <taxon>Neopterygii</taxon>
        <taxon>Teleostei</taxon>
        <taxon>Ostariophysi</taxon>
        <taxon>Cypriniformes</taxon>
        <taxon>Danionidae</taxon>
        <taxon>Danioninae</taxon>
        <taxon>Danio</taxon>
    </lineage>
</organism>